<evidence type="ECO:0000255" key="1">
    <source>
        <dbReference type="HAMAP-Rule" id="MF_00458"/>
    </source>
</evidence>
<evidence type="ECO:0000256" key="2">
    <source>
        <dbReference type="SAM" id="MobiDB-lite"/>
    </source>
</evidence>
<organism>
    <name type="scientific">Prochlorococcus marinus (strain MIT 9312)</name>
    <dbReference type="NCBI Taxonomy" id="74546"/>
    <lineage>
        <taxon>Bacteria</taxon>
        <taxon>Bacillati</taxon>
        <taxon>Cyanobacteriota</taxon>
        <taxon>Cyanophyceae</taxon>
        <taxon>Synechococcales</taxon>
        <taxon>Prochlorococcaceae</taxon>
        <taxon>Prochlorococcus</taxon>
    </lineage>
</organism>
<sequence length="767" mass="84315">MTISPPESGEKNKKVLEDPVKADPRPIDFAKLDKPGFWSTKLSKGPKTTTWIWNLHADAHDFDVHTGDAEEATRKIFSAHFGHLAIIFIWMSAAFFHGARFSNYTGWLADPTNVKPGAQQVWAVVGQEMLNGNLGADYNGIQISSGIFHMWRAWGITNESELMALAIGAVIMAALMLHGGIYHYHKAAPKLEWFQNIESMLNHHIAGLVGLGSLAWAGHCIHIGAPTAALLDAIDAGSPLVINGQKIATIADMPMPHQLCDPQIIGQIFPGLASGVGNFFSLNWFAFSDFLTFKGGLNPVTGSLWMTDIAHHHLAFGVIAIIGGHLYRTNYGIGSSMKEILEAHQGDPILFPAPKGHQGLFEFMAESRHAQLSVNLACLGSLSILISHHMYAMPPYPYIATDYMTVLGLFTHHMWIGALFIVGAGAHAGIAMVRDYDPAKHIDNVLDRILKARDALISHLNWVCMWLGFHSFGLYIHNDTMRALGRPQDMFSDNAIQLQPIFAQWVQSIQASAVGTSILAGTPEGLPQKALSEVFNGSLVEVGGKVAISPIQLGTADLMIHHIHAFQIHVTVLILLKGVLYARSSRLIPDKASLGFRFPCDGPGRGGTCQVSSWDHVFLALFWMYNCISIVIFHFSWKMQSDVWGLTGGNFSQSAITINGWLRDFLWAQSSQVLTSYGEAISMYGLMFLGAHFIWAFSLMFLFSGRGYWQELFESIVWAHNKLKVAPTIQPRALSITQGRAVGVAHFLLGGIATTWAFFHARLFGLG</sequence>
<comment type="function">
    <text evidence="1">PsaA and PsaB bind P700, the primary electron donor of photosystem I (PSI), as well as the electron acceptors A0, A1 and FX. PSI is a plastocyanin/cytochrome c6-ferredoxin oxidoreductase, converting photonic excitation into a charge separation, which transfers an electron from the donor P700 chlorophyll pair to the spectroscopically characterized acceptors A0, A1, FX, FA and FB in turn. Oxidized P700 is reduced on the lumenal side of the thylakoid membrane by plastocyanin or cytochrome c6.</text>
</comment>
<comment type="catalytic activity">
    <reaction evidence="1">
        <text>reduced [plastocyanin] + hnu + oxidized [2Fe-2S]-[ferredoxin] = oxidized [plastocyanin] + reduced [2Fe-2S]-[ferredoxin]</text>
        <dbReference type="Rhea" id="RHEA:30407"/>
        <dbReference type="Rhea" id="RHEA-COMP:10000"/>
        <dbReference type="Rhea" id="RHEA-COMP:10001"/>
        <dbReference type="Rhea" id="RHEA-COMP:10039"/>
        <dbReference type="Rhea" id="RHEA-COMP:10040"/>
        <dbReference type="ChEBI" id="CHEBI:29036"/>
        <dbReference type="ChEBI" id="CHEBI:30212"/>
        <dbReference type="ChEBI" id="CHEBI:33737"/>
        <dbReference type="ChEBI" id="CHEBI:33738"/>
        <dbReference type="ChEBI" id="CHEBI:49552"/>
        <dbReference type="EC" id="1.97.1.12"/>
    </reaction>
</comment>
<comment type="cofactor">
    <text evidence="1">PSI electron transfer chain: 5 divinyl chlorophyll a, 1 divinyl chlorophyll a', 2 phylloquinones and 3 4Fe-4S clusters. PSI core antenna: 90 divinyl chlorophyll a, 22 carotenoids, 3 phospholipids and 1 galactolipid. P700 is a divinyl chlorophyll a/divinyl chlorophyll a' dimer, A0 is one or more divinyl chlorophyll a, A1 is one or both phylloquinones and FX is a shared 4Fe-4S iron-sulfur center.</text>
</comment>
<comment type="subunit">
    <text evidence="1">The PsaA/B heterodimer binds the P700 divinyl chlorophyll special pair and subsequent electron acceptors. PSI consists of a core antenna complex that captures photons, and an electron transfer chain that converts photonic excitation into a charge separation. The cyanobacterial PSI reaction center is composed of one copy each of PsaA,B,C,D,E,F,I,J,K,L,M and X, and forms trimeric complexes.</text>
</comment>
<comment type="subcellular location">
    <subcellularLocation>
        <location evidence="1">Cellular thylakoid membrane</location>
        <topology evidence="1">Multi-pass membrane protein</topology>
    </subcellularLocation>
</comment>
<comment type="similarity">
    <text evidence="1">Belongs to the PsaA/PsaB family.</text>
</comment>
<feature type="chain" id="PRO_0000294202" description="Photosystem I P700 chlorophyll a apoprotein A1">
    <location>
        <begin position="1"/>
        <end position="767"/>
    </location>
</feature>
<feature type="transmembrane region" description="Helical; Name=I" evidence="1">
    <location>
        <begin position="76"/>
        <end position="99"/>
    </location>
</feature>
<feature type="transmembrane region" description="Helical; Name=II" evidence="1">
    <location>
        <begin position="162"/>
        <end position="185"/>
    </location>
</feature>
<feature type="transmembrane region" description="Helical; Name=III" evidence="1">
    <location>
        <begin position="201"/>
        <end position="225"/>
    </location>
</feature>
<feature type="transmembrane region" description="Helical; Name=IV" evidence="1">
    <location>
        <begin position="309"/>
        <end position="327"/>
    </location>
</feature>
<feature type="transmembrane region" description="Helical; Name=V" evidence="1">
    <location>
        <begin position="368"/>
        <end position="391"/>
    </location>
</feature>
<feature type="transmembrane region" description="Helical; Name=VI" evidence="1">
    <location>
        <begin position="407"/>
        <end position="433"/>
    </location>
</feature>
<feature type="transmembrane region" description="Helical; Name=VII" evidence="1">
    <location>
        <begin position="455"/>
        <end position="477"/>
    </location>
</feature>
<feature type="transmembrane region" description="Helical; Name=VIII" evidence="1">
    <location>
        <begin position="558"/>
        <end position="576"/>
    </location>
</feature>
<feature type="transmembrane region" description="Helical; Name=IX" evidence="1">
    <location>
        <begin position="616"/>
        <end position="637"/>
    </location>
</feature>
<feature type="transmembrane region" description="Helical; Name=X" evidence="1">
    <location>
        <begin position="681"/>
        <end position="703"/>
    </location>
</feature>
<feature type="transmembrane region" description="Helical; Name=XI" evidence="1">
    <location>
        <begin position="741"/>
        <end position="761"/>
    </location>
</feature>
<feature type="region of interest" description="Disordered" evidence="2">
    <location>
        <begin position="1"/>
        <end position="22"/>
    </location>
</feature>
<feature type="compositionally biased region" description="Basic and acidic residues" evidence="2">
    <location>
        <begin position="8"/>
        <end position="22"/>
    </location>
</feature>
<feature type="binding site" evidence="1">
    <location>
        <position position="600"/>
    </location>
    <ligand>
        <name>[4Fe-4S] cluster</name>
        <dbReference type="ChEBI" id="CHEBI:49883"/>
        <note>ligand shared between dimeric partners</note>
    </ligand>
</feature>
<feature type="binding site" evidence="1">
    <location>
        <position position="609"/>
    </location>
    <ligand>
        <name>[4Fe-4S] cluster</name>
        <dbReference type="ChEBI" id="CHEBI:49883"/>
        <note>ligand shared between dimeric partners</note>
    </ligand>
</feature>
<feature type="binding site" description="axial binding residue" evidence="1">
    <location>
        <position position="692"/>
    </location>
    <ligand>
        <name>divinylchlorophyll a'</name>
        <dbReference type="ChEBI" id="CHEBI:189420"/>
        <label>A1</label>
    </ligand>
    <ligandPart>
        <name>Mg</name>
        <dbReference type="ChEBI" id="CHEBI:25107"/>
    </ligandPart>
</feature>
<feature type="binding site" description="axial binding residue" evidence="1">
    <location>
        <position position="700"/>
    </location>
    <ligand>
        <name>divinyl chlorophyll a</name>
        <dbReference type="ChEBI" id="CHEBI:73095"/>
        <label>A3</label>
    </ligand>
    <ligandPart>
        <name>Mg</name>
        <dbReference type="ChEBI" id="CHEBI:25107"/>
    </ligandPart>
</feature>
<feature type="binding site" evidence="1">
    <location>
        <position position="708"/>
    </location>
    <ligand>
        <name>divinyl chlorophyll a</name>
        <dbReference type="ChEBI" id="CHEBI:73095"/>
        <label>A3</label>
    </ligand>
</feature>
<feature type="binding site" evidence="1">
    <location>
        <position position="709"/>
    </location>
    <ligand>
        <name>phylloquinone</name>
        <dbReference type="ChEBI" id="CHEBI:18067"/>
        <label>A</label>
    </ligand>
</feature>
<protein>
    <recommendedName>
        <fullName evidence="1">Photosystem I P700 chlorophyll a apoprotein A1</fullName>
        <ecNumber evidence="1">1.97.1.12</ecNumber>
    </recommendedName>
    <alternativeName>
        <fullName evidence="1">PsaA</fullName>
    </alternativeName>
</protein>
<gene>
    <name evidence="1" type="primary">psaA</name>
    <name type="ordered locus">PMT9312_1616</name>
</gene>
<reference key="1">
    <citation type="journal article" date="2006" name="Science">
        <title>Genomic islands and the ecology and evolution of Prochlorococcus.</title>
        <authorList>
            <person name="Coleman M.L."/>
            <person name="Sullivan M.B."/>
            <person name="Martiny A.C."/>
            <person name="Steglich C."/>
            <person name="Barry K."/>
            <person name="Delong E.F."/>
            <person name="Chisholm S.W."/>
        </authorList>
    </citation>
    <scope>NUCLEOTIDE SEQUENCE [LARGE SCALE GENOMIC DNA]</scope>
    <source>
        <strain>MIT 9312</strain>
    </source>
</reference>
<keyword id="KW-0004">4Fe-4S</keyword>
<keyword id="KW-0148">Chlorophyll</keyword>
<keyword id="KW-0157">Chromophore</keyword>
<keyword id="KW-0249">Electron transport</keyword>
<keyword id="KW-0408">Iron</keyword>
<keyword id="KW-0411">Iron-sulfur</keyword>
<keyword id="KW-0460">Magnesium</keyword>
<keyword id="KW-0472">Membrane</keyword>
<keyword id="KW-0479">Metal-binding</keyword>
<keyword id="KW-0560">Oxidoreductase</keyword>
<keyword id="KW-0602">Photosynthesis</keyword>
<keyword id="KW-0603">Photosystem I</keyword>
<keyword id="KW-0793">Thylakoid</keyword>
<keyword id="KW-0812">Transmembrane</keyword>
<keyword id="KW-1133">Transmembrane helix</keyword>
<keyword id="KW-0813">Transport</keyword>
<dbReference type="EC" id="1.97.1.12" evidence="1"/>
<dbReference type="EMBL" id="CP000111">
    <property type="protein sequence ID" value="ABB50676.1"/>
    <property type="molecule type" value="Genomic_DNA"/>
</dbReference>
<dbReference type="RefSeq" id="WP_011377158.1">
    <property type="nucleotide sequence ID" value="NC_007577.1"/>
</dbReference>
<dbReference type="SMR" id="Q318L9"/>
<dbReference type="STRING" id="74546.PMT9312_1616"/>
<dbReference type="KEGG" id="pmi:PMT9312_1616"/>
<dbReference type="eggNOG" id="COG2885">
    <property type="taxonomic scope" value="Bacteria"/>
</dbReference>
<dbReference type="HOGENOM" id="CLU_016126_1_0_3"/>
<dbReference type="OrthoDB" id="499313at2"/>
<dbReference type="Proteomes" id="UP000002715">
    <property type="component" value="Chromosome"/>
</dbReference>
<dbReference type="GO" id="GO:0009522">
    <property type="term" value="C:photosystem I"/>
    <property type="evidence" value="ECO:0007669"/>
    <property type="project" value="UniProtKB-KW"/>
</dbReference>
<dbReference type="GO" id="GO:0031676">
    <property type="term" value="C:plasma membrane-derived thylakoid membrane"/>
    <property type="evidence" value="ECO:0007669"/>
    <property type="project" value="UniProtKB-SubCell"/>
</dbReference>
<dbReference type="GO" id="GO:0051539">
    <property type="term" value="F:4 iron, 4 sulfur cluster binding"/>
    <property type="evidence" value="ECO:0007669"/>
    <property type="project" value="UniProtKB-KW"/>
</dbReference>
<dbReference type="GO" id="GO:0016168">
    <property type="term" value="F:chlorophyll binding"/>
    <property type="evidence" value="ECO:0007669"/>
    <property type="project" value="UniProtKB-KW"/>
</dbReference>
<dbReference type="GO" id="GO:0009055">
    <property type="term" value="F:electron transfer activity"/>
    <property type="evidence" value="ECO:0007669"/>
    <property type="project" value="UniProtKB-UniRule"/>
</dbReference>
<dbReference type="GO" id="GO:0000287">
    <property type="term" value="F:magnesium ion binding"/>
    <property type="evidence" value="ECO:0007669"/>
    <property type="project" value="UniProtKB-UniRule"/>
</dbReference>
<dbReference type="GO" id="GO:0016491">
    <property type="term" value="F:oxidoreductase activity"/>
    <property type="evidence" value="ECO:0007669"/>
    <property type="project" value="UniProtKB-KW"/>
</dbReference>
<dbReference type="GO" id="GO:0015979">
    <property type="term" value="P:photosynthesis"/>
    <property type="evidence" value="ECO:0007669"/>
    <property type="project" value="UniProtKB-UniRule"/>
</dbReference>
<dbReference type="Gene3D" id="1.20.1130.10">
    <property type="entry name" value="Photosystem I PsaA/PsaB"/>
    <property type="match status" value="1"/>
</dbReference>
<dbReference type="HAMAP" id="MF_00458">
    <property type="entry name" value="PSI_PsaA"/>
    <property type="match status" value="1"/>
</dbReference>
<dbReference type="InterPro" id="IPR006243">
    <property type="entry name" value="PSI_PsaA"/>
</dbReference>
<dbReference type="InterPro" id="IPR001280">
    <property type="entry name" value="PSI_PsaA/B"/>
</dbReference>
<dbReference type="InterPro" id="IPR020586">
    <property type="entry name" value="PSI_PsaA/B_CS"/>
</dbReference>
<dbReference type="InterPro" id="IPR036408">
    <property type="entry name" value="PSI_PsaA/B_sf"/>
</dbReference>
<dbReference type="NCBIfam" id="TIGR01335">
    <property type="entry name" value="psaA"/>
    <property type="match status" value="1"/>
</dbReference>
<dbReference type="PANTHER" id="PTHR30128">
    <property type="entry name" value="OUTER MEMBRANE PROTEIN, OMPA-RELATED"/>
    <property type="match status" value="1"/>
</dbReference>
<dbReference type="PANTHER" id="PTHR30128:SF19">
    <property type="entry name" value="PHOTOSYSTEM I P700 CHLOROPHYLL A APOPROTEIN A1-RELATED"/>
    <property type="match status" value="1"/>
</dbReference>
<dbReference type="Pfam" id="PF00223">
    <property type="entry name" value="PsaA_PsaB"/>
    <property type="match status" value="1"/>
</dbReference>
<dbReference type="PIRSF" id="PIRSF002905">
    <property type="entry name" value="PSI_A"/>
    <property type="match status" value="1"/>
</dbReference>
<dbReference type="PRINTS" id="PR00257">
    <property type="entry name" value="PHOTSYSPSAAB"/>
</dbReference>
<dbReference type="SUPFAM" id="SSF81558">
    <property type="entry name" value="Photosystem I subunits PsaA/PsaB"/>
    <property type="match status" value="1"/>
</dbReference>
<dbReference type="PROSITE" id="PS00419">
    <property type="entry name" value="PHOTOSYSTEM_I_PSAAB"/>
    <property type="match status" value="1"/>
</dbReference>
<name>PSAA_PROM9</name>
<accession>Q318L9</accession>
<proteinExistence type="inferred from homology"/>